<evidence type="ECO:0000255" key="1">
    <source>
        <dbReference type="HAMAP-Rule" id="MF_00176"/>
    </source>
</evidence>
<reference key="1">
    <citation type="journal article" date="2008" name="J. Bacteriol.">
        <title>Complete genome sequence of the soil actinomycete Kocuria rhizophila.</title>
        <authorList>
            <person name="Takarada H."/>
            <person name="Sekine M."/>
            <person name="Kosugi H."/>
            <person name="Matsuo Y."/>
            <person name="Fujisawa T."/>
            <person name="Omata S."/>
            <person name="Kishi E."/>
            <person name="Shimizu A."/>
            <person name="Tsukatani N."/>
            <person name="Tanikawa S."/>
            <person name="Fujita N."/>
            <person name="Harayama S."/>
        </authorList>
    </citation>
    <scope>NUCLEOTIDE SEQUENCE [LARGE SCALE GENOMIC DNA]</scope>
    <source>
        <strain>ATCC 9341 / DSM 348 / NBRC 103217 / DC2201</strain>
    </source>
</reference>
<feature type="chain" id="PRO_1000098081" description="Serine--tRNA ligase">
    <location>
        <begin position="1"/>
        <end position="434"/>
    </location>
</feature>
<feature type="binding site" evidence="1">
    <location>
        <begin position="230"/>
        <end position="232"/>
    </location>
    <ligand>
        <name>L-serine</name>
        <dbReference type="ChEBI" id="CHEBI:33384"/>
    </ligand>
</feature>
<feature type="binding site" evidence="1">
    <location>
        <begin position="261"/>
        <end position="263"/>
    </location>
    <ligand>
        <name>ATP</name>
        <dbReference type="ChEBI" id="CHEBI:30616"/>
    </ligand>
</feature>
<feature type="binding site" evidence="1">
    <location>
        <position position="277"/>
    </location>
    <ligand>
        <name>ATP</name>
        <dbReference type="ChEBI" id="CHEBI:30616"/>
    </ligand>
</feature>
<feature type="binding site" evidence="1">
    <location>
        <position position="284"/>
    </location>
    <ligand>
        <name>L-serine</name>
        <dbReference type="ChEBI" id="CHEBI:33384"/>
    </ligand>
</feature>
<feature type="binding site" evidence="1">
    <location>
        <begin position="348"/>
        <end position="351"/>
    </location>
    <ligand>
        <name>ATP</name>
        <dbReference type="ChEBI" id="CHEBI:30616"/>
    </ligand>
</feature>
<feature type="binding site" evidence="1">
    <location>
        <position position="393"/>
    </location>
    <ligand>
        <name>L-serine</name>
        <dbReference type="ChEBI" id="CHEBI:33384"/>
    </ligand>
</feature>
<gene>
    <name evidence="1" type="primary">serS</name>
    <name type="ordered locus">KRH_19380</name>
</gene>
<dbReference type="EC" id="6.1.1.11" evidence="1"/>
<dbReference type="EMBL" id="AP009152">
    <property type="protein sequence ID" value="BAG30285.1"/>
    <property type="molecule type" value="Genomic_DNA"/>
</dbReference>
<dbReference type="RefSeq" id="WP_012399006.1">
    <property type="nucleotide sequence ID" value="NC_010617.1"/>
</dbReference>
<dbReference type="SMR" id="B2GGG9"/>
<dbReference type="STRING" id="378753.KRH_19380"/>
<dbReference type="KEGG" id="krh:KRH_19380"/>
<dbReference type="eggNOG" id="COG0172">
    <property type="taxonomic scope" value="Bacteria"/>
</dbReference>
<dbReference type="HOGENOM" id="CLU_023797_0_1_11"/>
<dbReference type="OrthoDB" id="9804647at2"/>
<dbReference type="UniPathway" id="UPA00906">
    <property type="reaction ID" value="UER00895"/>
</dbReference>
<dbReference type="Proteomes" id="UP000008838">
    <property type="component" value="Chromosome"/>
</dbReference>
<dbReference type="GO" id="GO:0005737">
    <property type="term" value="C:cytoplasm"/>
    <property type="evidence" value="ECO:0007669"/>
    <property type="project" value="UniProtKB-SubCell"/>
</dbReference>
<dbReference type="GO" id="GO:0005524">
    <property type="term" value="F:ATP binding"/>
    <property type="evidence" value="ECO:0007669"/>
    <property type="project" value="UniProtKB-UniRule"/>
</dbReference>
<dbReference type="GO" id="GO:0004828">
    <property type="term" value="F:serine-tRNA ligase activity"/>
    <property type="evidence" value="ECO:0007669"/>
    <property type="project" value="UniProtKB-UniRule"/>
</dbReference>
<dbReference type="GO" id="GO:0016260">
    <property type="term" value="P:selenocysteine biosynthetic process"/>
    <property type="evidence" value="ECO:0007669"/>
    <property type="project" value="UniProtKB-UniRule"/>
</dbReference>
<dbReference type="GO" id="GO:0006434">
    <property type="term" value="P:seryl-tRNA aminoacylation"/>
    <property type="evidence" value="ECO:0007669"/>
    <property type="project" value="UniProtKB-UniRule"/>
</dbReference>
<dbReference type="CDD" id="cd00770">
    <property type="entry name" value="SerRS_core"/>
    <property type="match status" value="1"/>
</dbReference>
<dbReference type="Gene3D" id="3.30.930.10">
    <property type="entry name" value="Bira Bifunctional Protein, Domain 2"/>
    <property type="match status" value="1"/>
</dbReference>
<dbReference type="Gene3D" id="1.10.287.40">
    <property type="entry name" value="Serine-tRNA synthetase, tRNA binding domain"/>
    <property type="match status" value="1"/>
</dbReference>
<dbReference type="HAMAP" id="MF_00176">
    <property type="entry name" value="Ser_tRNA_synth_type1"/>
    <property type="match status" value="1"/>
</dbReference>
<dbReference type="InterPro" id="IPR002314">
    <property type="entry name" value="aa-tRNA-synt_IIb"/>
</dbReference>
<dbReference type="InterPro" id="IPR006195">
    <property type="entry name" value="aa-tRNA-synth_II"/>
</dbReference>
<dbReference type="InterPro" id="IPR045864">
    <property type="entry name" value="aa-tRNA-synth_II/BPL/LPL"/>
</dbReference>
<dbReference type="InterPro" id="IPR002317">
    <property type="entry name" value="Ser-tRNA-ligase_type_1"/>
</dbReference>
<dbReference type="InterPro" id="IPR015866">
    <property type="entry name" value="Ser-tRNA-synth_1_N"/>
</dbReference>
<dbReference type="InterPro" id="IPR042103">
    <property type="entry name" value="SerRS_1_N_sf"/>
</dbReference>
<dbReference type="InterPro" id="IPR033729">
    <property type="entry name" value="SerRS_core"/>
</dbReference>
<dbReference type="InterPro" id="IPR010978">
    <property type="entry name" value="tRNA-bd_arm"/>
</dbReference>
<dbReference type="NCBIfam" id="TIGR00414">
    <property type="entry name" value="serS"/>
    <property type="match status" value="1"/>
</dbReference>
<dbReference type="PANTHER" id="PTHR11778">
    <property type="entry name" value="SERYL-TRNA SYNTHETASE"/>
    <property type="match status" value="1"/>
</dbReference>
<dbReference type="Pfam" id="PF02403">
    <property type="entry name" value="Seryl_tRNA_N"/>
    <property type="match status" value="1"/>
</dbReference>
<dbReference type="Pfam" id="PF00587">
    <property type="entry name" value="tRNA-synt_2b"/>
    <property type="match status" value="1"/>
</dbReference>
<dbReference type="PIRSF" id="PIRSF001529">
    <property type="entry name" value="Ser-tRNA-synth_IIa"/>
    <property type="match status" value="1"/>
</dbReference>
<dbReference type="PRINTS" id="PR00981">
    <property type="entry name" value="TRNASYNTHSER"/>
</dbReference>
<dbReference type="SUPFAM" id="SSF55681">
    <property type="entry name" value="Class II aaRS and biotin synthetases"/>
    <property type="match status" value="1"/>
</dbReference>
<dbReference type="SUPFAM" id="SSF46589">
    <property type="entry name" value="tRNA-binding arm"/>
    <property type="match status" value="1"/>
</dbReference>
<dbReference type="PROSITE" id="PS50862">
    <property type="entry name" value="AA_TRNA_LIGASE_II"/>
    <property type="match status" value="1"/>
</dbReference>
<sequence>MIDINELRADPDTYRASQTARGADAGLVDRILEADSRRRSAITDFESLRAEQNAFGKKVARAQGEEKQQLLAQVKQLAADVKAAQAAADEAQATQQQLVTQFPNLIVEGIPAGGEDDFVQLRTEGTPRDFAAEGFEPRDHLELGELLDGIDMERGAKVSGSRFYFLKRDVARLETALLMAAQDLALDNGFIPMTTPNLVRPGIMNGTGFDVEHDDEIYRVGKDDLYLVGTSEVALAGYHSDEILDLSGGPLRYAGWSSCYRREAGSAGKDTRGIIRVHQFNKLEMFVYCHPEDAAAEHERLLAWEEQMLQACGLAYRVIDTAAGDLGTSAARKFDCEAWIPTQGKYRELTSTSNCTTYQARRLNIRERLPETTDAHGKVKKGGTRAVATLNGTLATTRWLVALLETHQQADGSVTVPELLRPYLRGQEVLRPVA</sequence>
<protein>
    <recommendedName>
        <fullName evidence="1">Serine--tRNA ligase</fullName>
        <ecNumber evidence="1">6.1.1.11</ecNumber>
    </recommendedName>
    <alternativeName>
        <fullName evidence="1">Seryl-tRNA synthetase</fullName>
        <shortName evidence="1">SerRS</shortName>
    </alternativeName>
    <alternativeName>
        <fullName evidence="1">Seryl-tRNA(Ser/Sec) synthetase</fullName>
    </alternativeName>
</protein>
<proteinExistence type="inferred from homology"/>
<accession>B2GGG9</accession>
<comment type="function">
    <text evidence="1">Catalyzes the attachment of serine to tRNA(Ser). Is also able to aminoacylate tRNA(Sec) with serine, to form the misacylated tRNA L-seryl-tRNA(Sec), which will be further converted into selenocysteinyl-tRNA(Sec).</text>
</comment>
<comment type="catalytic activity">
    <reaction evidence="1">
        <text>tRNA(Ser) + L-serine + ATP = L-seryl-tRNA(Ser) + AMP + diphosphate + H(+)</text>
        <dbReference type="Rhea" id="RHEA:12292"/>
        <dbReference type="Rhea" id="RHEA-COMP:9669"/>
        <dbReference type="Rhea" id="RHEA-COMP:9703"/>
        <dbReference type="ChEBI" id="CHEBI:15378"/>
        <dbReference type="ChEBI" id="CHEBI:30616"/>
        <dbReference type="ChEBI" id="CHEBI:33019"/>
        <dbReference type="ChEBI" id="CHEBI:33384"/>
        <dbReference type="ChEBI" id="CHEBI:78442"/>
        <dbReference type="ChEBI" id="CHEBI:78533"/>
        <dbReference type="ChEBI" id="CHEBI:456215"/>
        <dbReference type="EC" id="6.1.1.11"/>
    </reaction>
</comment>
<comment type="catalytic activity">
    <reaction evidence="1">
        <text>tRNA(Sec) + L-serine + ATP = L-seryl-tRNA(Sec) + AMP + diphosphate + H(+)</text>
        <dbReference type="Rhea" id="RHEA:42580"/>
        <dbReference type="Rhea" id="RHEA-COMP:9742"/>
        <dbReference type="Rhea" id="RHEA-COMP:10128"/>
        <dbReference type="ChEBI" id="CHEBI:15378"/>
        <dbReference type="ChEBI" id="CHEBI:30616"/>
        <dbReference type="ChEBI" id="CHEBI:33019"/>
        <dbReference type="ChEBI" id="CHEBI:33384"/>
        <dbReference type="ChEBI" id="CHEBI:78442"/>
        <dbReference type="ChEBI" id="CHEBI:78533"/>
        <dbReference type="ChEBI" id="CHEBI:456215"/>
        <dbReference type="EC" id="6.1.1.11"/>
    </reaction>
</comment>
<comment type="pathway">
    <text evidence="1">Aminoacyl-tRNA biosynthesis; selenocysteinyl-tRNA(Sec) biosynthesis; L-seryl-tRNA(Sec) from L-serine and tRNA(Sec): step 1/1.</text>
</comment>
<comment type="subunit">
    <text evidence="1">Homodimer. The tRNA molecule binds across the dimer.</text>
</comment>
<comment type="subcellular location">
    <subcellularLocation>
        <location evidence="1">Cytoplasm</location>
    </subcellularLocation>
</comment>
<comment type="domain">
    <text evidence="1">Consists of two distinct domains, a catalytic core and a N-terminal extension that is involved in tRNA binding.</text>
</comment>
<comment type="similarity">
    <text evidence="1">Belongs to the class-II aminoacyl-tRNA synthetase family. Type-1 seryl-tRNA synthetase subfamily.</text>
</comment>
<name>SYS_KOCRD</name>
<organism>
    <name type="scientific">Kocuria rhizophila (strain ATCC 9341 / DSM 348 / NBRC 103217 / DC2201)</name>
    <dbReference type="NCBI Taxonomy" id="378753"/>
    <lineage>
        <taxon>Bacteria</taxon>
        <taxon>Bacillati</taxon>
        <taxon>Actinomycetota</taxon>
        <taxon>Actinomycetes</taxon>
        <taxon>Micrococcales</taxon>
        <taxon>Micrococcaceae</taxon>
        <taxon>Kocuria</taxon>
    </lineage>
</organism>
<keyword id="KW-0030">Aminoacyl-tRNA synthetase</keyword>
<keyword id="KW-0067">ATP-binding</keyword>
<keyword id="KW-0963">Cytoplasm</keyword>
<keyword id="KW-0436">Ligase</keyword>
<keyword id="KW-0547">Nucleotide-binding</keyword>
<keyword id="KW-0648">Protein biosynthesis</keyword>
<keyword id="KW-1185">Reference proteome</keyword>